<reference key="1">
    <citation type="journal article" date="1996" name="Microbiology">
        <title>New genes in the 170 degrees region of the Bacillus subtilis genome encode DNA gyrase subunits, a thioredoxin, a xylanase and an amino acid transporter.</title>
        <authorList>
            <person name="Rose M."/>
            <person name="Entian K.-D."/>
        </authorList>
    </citation>
    <scope>NUCLEOTIDE SEQUENCE [GENOMIC DNA]</scope>
    <source>
        <strain>168</strain>
    </source>
</reference>
<reference key="2">
    <citation type="journal article" date="1997" name="Nature">
        <title>The complete genome sequence of the Gram-positive bacterium Bacillus subtilis.</title>
        <authorList>
            <person name="Kunst F."/>
            <person name="Ogasawara N."/>
            <person name="Moszer I."/>
            <person name="Albertini A.M."/>
            <person name="Alloni G."/>
            <person name="Azevedo V."/>
            <person name="Bertero M.G."/>
            <person name="Bessieres P."/>
            <person name="Bolotin A."/>
            <person name="Borchert S."/>
            <person name="Borriss R."/>
            <person name="Boursier L."/>
            <person name="Brans A."/>
            <person name="Braun M."/>
            <person name="Brignell S.C."/>
            <person name="Bron S."/>
            <person name="Brouillet S."/>
            <person name="Bruschi C.V."/>
            <person name="Caldwell B."/>
            <person name="Capuano V."/>
            <person name="Carter N.M."/>
            <person name="Choi S.-K."/>
            <person name="Codani J.-J."/>
            <person name="Connerton I.F."/>
            <person name="Cummings N.J."/>
            <person name="Daniel R.A."/>
            <person name="Denizot F."/>
            <person name="Devine K.M."/>
            <person name="Duesterhoeft A."/>
            <person name="Ehrlich S.D."/>
            <person name="Emmerson P.T."/>
            <person name="Entian K.-D."/>
            <person name="Errington J."/>
            <person name="Fabret C."/>
            <person name="Ferrari E."/>
            <person name="Foulger D."/>
            <person name="Fritz C."/>
            <person name="Fujita M."/>
            <person name="Fujita Y."/>
            <person name="Fuma S."/>
            <person name="Galizzi A."/>
            <person name="Galleron N."/>
            <person name="Ghim S.-Y."/>
            <person name="Glaser P."/>
            <person name="Goffeau A."/>
            <person name="Golightly E.J."/>
            <person name="Grandi G."/>
            <person name="Guiseppi G."/>
            <person name="Guy B.J."/>
            <person name="Haga K."/>
            <person name="Haiech J."/>
            <person name="Harwood C.R."/>
            <person name="Henaut A."/>
            <person name="Hilbert H."/>
            <person name="Holsappel S."/>
            <person name="Hosono S."/>
            <person name="Hullo M.-F."/>
            <person name="Itaya M."/>
            <person name="Jones L.-M."/>
            <person name="Joris B."/>
            <person name="Karamata D."/>
            <person name="Kasahara Y."/>
            <person name="Klaerr-Blanchard M."/>
            <person name="Klein C."/>
            <person name="Kobayashi Y."/>
            <person name="Koetter P."/>
            <person name="Koningstein G."/>
            <person name="Krogh S."/>
            <person name="Kumano M."/>
            <person name="Kurita K."/>
            <person name="Lapidus A."/>
            <person name="Lardinois S."/>
            <person name="Lauber J."/>
            <person name="Lazarevic V."/>
            <person name="Lee S.-M."/>
            <person name="Levine A."/>
            <person name="Liu H."/>
            <person name="Masuda S."/>
            <person name="Mauel C."/>
            <person name="Medigue C."/>
            <person name="Medina N."/>
            <person name="Mellado R.P."/>
            <person name="Mizuno M."/>
            <person name="Moestl D."/>
            <person name="Nakai S."/>
            <person name="Noback M."/>
            <person name="Noone D."/>
            <person name="O'Reilly M."/>
            <person name="Ogawa K."/>
            <person name="Ogiwara A."/>
            <person name="Oudega B."/>
            <person name="Park S.-H."/>
            <person name="Parro V."/>
            <person name="Pohl T.M."/>
            <person name="Portetelle D."/>
            <person name="Porwollik S."/>
            <person name="Prescott A.M."/>
            <person name="Presecan E."/>
            <person name="Pujic P."/>
            <person name="Purnelle B."/>
            <person name="Rapoport G."/>
            <person name="Rey M."/>
            <person name="Reynolds S."/>
            <person name="Rieger M."/>
            <person name="Rivolta C."/>
            <person name="Rocha E."/>
            <person name="Roche B."/>
            <person name="Rose M."/>
            <person name="Sadaie Y."/>
            <person name="Sato T."/>
            <person name="Scanlan E."/>
            <person name="Schleich S."/>
            <person name="Schroeter R."/>
            <person name="Scoffone F."/>
            <person name="Sekiguchi J."/>
            <person name="Sekowska A."/>
            <person name="Seror S.J."/>
            <person name="Serror P."/>
            <person name="Shin B.-S."/>
            <person name="Soldo B."/>
            <person name="Sorokin A."/>
            <person name="Tacconi E."/>
            <person name="Takagi T."/>
            <person name="Takahashi H."/>
            <person name="Takemaru K."/>
            <person name="Takeuchi M."/>
            <person name="Tamakoshi A."/>
            <person name="Tanaka T."/>
            <person name="Terpstra P."/>
            <person name="Tognoni A."/>
            <person name="Tosato V."/>
            <person name="Uchiyama S."/>
            <person name="Vandenbol M."/>
            <person name="Vannier F."/>
            <person name="Vassarotti A."/>
            <person name="Viari A."/>
            <person name="Wambutt R."/>
            <person name="Wedler E."/>
            <person name="Wedler H."/>
            <person name="Weitzenegger T."/>
            <person name="Winters P."/>
            <person name="Wipat A."/>
            <person name="Yamamoto H."/>
            <person name="Yamane K."/>
            <person name="Yasumoto K."/>
            <person name="Yata K."/>
            <person name="Yoshida K."/>
            <person name="Yoshikawa H.-F."/>
            <person name="Zumstein E."/>
            <person name="Yoshikawa H."/>
            <person name="Danchin A."/>
        </authorList>
    </citation>
    <scope>NUCLEOTIDE SEQUENCE [LARGE SCALE GENOMIC DNA]</scope>
    <source>
        <strain>168</strain>
    </source>
</reference>
<reference key="3">
    <citation type="journal article" date="1997" name="J. Bacteriol.">
        <title>Identification and characterization of the ccdA gene, required for cytochrome c synthesis in Bacillus subtilis.</title>
        <authorList>
            <person name="Schioett T."/>
            <person name="von Wachenfeldt C."/>
            <person name="Hederstedt L."/>
        </authorList>
    </citation>
    <scope>NUCLEOTIDE SEQUENCE [GENOMIC DNA] OF 561-667</scope>
    <source>
        <strain>168</strain>
    </source>
</reference>
<gene>
    <name type="primary">tkt</name>
    <name type="synonym">tktA</name>
    <name type="ordered locus">BSU17890</name>
</gene>
<keyword id="KW-0106">Calcium</keyword>
<keyword id="KW-0460">Magnesium</keyword>
<keyword id="KW-0479">Metal-binding</keyword>
<keyword id="KW-1185">Reference proteome</keyword>
<keyword id="KW-0786">Thiamine pyrophosphate</keyword>
<keyword id="KW-0808">Transferase</keyword>
<evidence type="ECO:0000250" key="1"/>
<evidence type="ECO:0000305" key="2"/>
<feature type="chain" id="PRO_0000191852" description="Transketolase">
    <location>
        <begin position="1"/>
        <end position="667"/>
    </location>
</feature>
<feature type="active site" description="Proton donor" evidence="1">
    <location>
        <position position="411"/>
    </location>
</feature>
<feature type="binding site" evidence="1">
    <location>
        <position position="27"/>
    </location>
    <ligand>
        <name>substrate</name>
    </ligand>
</feature>
<feature type="binding site" evidence="1">
    <location>
        <position position="67"/>
    </location>
    <ligand>
        <name>thiamine diphosphate</name>
        <dbReference type="ChEBI" id="CHEBI:58937"/>
    </ligand>
</feature>
<feature type="binding site" evidence="1">
    <location>
        <begin position="115"/>
        <end position="117"/>
    </location>
    <ligand>
        <name>thiamine diphosphate</name>
        <dbReference type="ChEBI" id="CHEBI:58937"/>
    </ligand>
</feature>
<feature type="binding site" evidence="1">
    <location>
        <position position="156"/>
    </location>
    <ligand>
        <name>Mg(2+)</name>
        <dbReference type="ChEBI" id="CHEBI:18420"/>
    </ligand>
</feature>
<feature type="binding site" evidence="1">
    <location>
        <position position="157"/>
    </location>
    <ligand>
        <name>thiamine diphosphate</name>
        <dbReference type="ChEBI" id="CHEBI:58937"/>
    </ligand>
</feature>
<feature type="binding site" evidence="1">
    <location>
        <position position="186"/>
    </location>
    <ligand>
        <name>Mg(2+)</name>
        <dbReference type="ChEBI" id="CHEBI:18420"/>
    </ligand>
</feature>
<feature type="binding site" evidence="1">
    <location>
        <position position="186"/>
    </location>
    <ligand>
        <name>thiamine diphosphate</name>
        <dbReference type="ChEBI" id="CHEBI:58937"/>
    </ligand>
</feature>
<feature type="binding site" evidence="1">
    <location>
        <position position="188"/>
    </location>
    <ligand>
        <name>Mg(2+)</name>
        <dbReference type="ChEBI" id="CHEBI:18420"/>
    </ligand>
</feature>
<feature type="binding site" evidence="1">
    <location>
        <position position="262"/>
    </location>
    <ligand>
        <name>substrate</name>
    </ligand>
</feature>
<feature type="binding site" evidence="1">
    <location>
        <position position="262"/>
    </location>
    <ligand>
        <name>thiamine diphosphate</name>
        <dbReference type="ChEBI" id="CHEBI:58937"/>
    </ligand>
</feature>
<feature type="binding site" evidence="1">
    <location>
        <position position="357"/>
    </location>
    <ligand>
        <name>substrate</name>
    </ligand>
</feature>
<feature type="binding site" evidence="1">
    <location>
        <position position="384"/>
    </location>
    <ligand>
        <name>substrate</name>
    </ligand>
</feature>
<feature type="binding site" evidence="1">
    <location>
        <position position="437"/>
    </location>
    <ligand>
        <name>thiamine diphosphate</name>
        <dbReference type="ChEBI" id="CHEBI:58937"/>
    </ligand>
</feature>
<feature type="binding site" evidence="1">
    <location>
        <position position="461"/>
    </location>
    <ligand>
        <name>substrate</name>
    </ligand>
</feature>
<feature type="binding site" evidence="1">
    <location>
        <position position="469"/>
    </location>
    <ligand>
        <name>substrate</name>
    </ligand>
</feature>
<feature type="binding site" evidence="1">
    <location>
        <position position="520"/>
    </location>
    <ligand>
        <name>substrate</name>
    </ligand>
</feature>
<feature type="site" description="Important for catalytic activity" evidence="1">
    <location>
        <position position="27"/>
    </location>
</feature>
<feature type="site" description="Important for catalytic activity" evidence="1">
    <location>
        <position position="262"/>
    </location>
</feature>
<name>TKT_BACSU</name>
<dbReference type="EC" id="2.2.1.1"/>
<dbReference type="EMBL" id="Z73234">
    <property type="protein sequence ID" value="CAA97616.1"/>
    <property type="molecule type" value="Genomic_DNA"/>
</dbReference>
<dbReference type="EMBL" id="AL009126">
    <property type="protein sequence ID" value="CAB13673.1"/>
    <property type="molecule type" value="Genomic_DNA"/>
</dbReference>
<dbReference type="EMBL" id="X87845">
    <property type="protein sequence ID" value="CAA61113.1"/>
    <property type="molecule type" value="Genomic_DNA"/>
</dbReference>
<dbReference type="PIR" id="G69723">
    <property type="entry name" value="G69723"/>
</dbReference>
<dbReference type="RefSeq" id="NP_389672.1">
    <property type="nucleotide sequence ID" value="NC_000964.3"/>
</dbReference>
<dbReference type="RefSeq" id="WP_003245397.1">
    <property type="nucleotide sequence ID" value="NZ_OZ025638.1"/>
</dbReference>
<dbReference type="SMR" id="P45694"/>
<dbReference type="FunCoup" id="P45694">
    <property type="interactions" value="606"/>
</dbReference>
<dbReference type="IntAct" id="P45694">
    <property type="interactions" value="3"/>
</dbReference>
<dbReference type="MINT" id="P45694"/>
<dbReference type="STRING" id="224308.BSU17890"/>
<dbReference type="jPOST" id="P45694"/>
<dbReference type="PaxDb" id="224308-BSU17890"/>
<dbReference type="EnsemblBacteria" id="CAB13673">
    <property type="protein sequence ID" value="CAB13673"/>
    <property type="gene ID" value="BSU_17890"/>
</dbReference>
<dbReference type="GeneID" id="937377"/>
<dbReference type="KEGG" id="bsu:BSU17890"/>
<dbReference type="PATRIC" id="fig|224308.179.peg.1950"/>
<dbReference type="eggNOG" id="COG0021">
    <property type="taxonomic scope" value="Bacteria"/>
</dbReference>
<dbReference type="InParanoid" id="P45694"/>
<dbReference type="OrthoDB" id="8732661at2"/>
<dbReference type="PhylomeDB" id="P45694"/>
<dbReference type="BioCyc" id="BSUB:BSU17890-MONOMER"/>
<dbReference type="Proteomes" id="UP000001570">
    <property type="component" value="Chromosome"/>
</dbReference>
<dbReference type="GO" id="GO:0005829">
    <property type="term" value="C:cytosol"/>
    <property type="evidence" value="ECO:0000318"/>
    <property type="project" value="GO_Central"/>
</dbReference>
<dbReference type="GO" id="GO:0046872">
    <property type="term" value="F:metal ion binding"/>
    <property type="evidence" value="ECO:0007669"/>
    <property type="project" value="UniProtKB-KW"/>
</dbReference>
<dbReference type="GO" id="GO:0004802">
    <property type="term" value="F:transketolase activity"/>
    <property type="evidence" value="ECO:0000318"/>
    <property type="project" value="GO_Central"/>
</dbReference>
<dbReference type="GO" id="GO:0006098">
    <property type="term" value="P:pentose-phosphate shunt"/>
    <property type="evidence" value="ECO:0000318"/>
    <property type="project" value="GO_Central"/>
</dbReference>
<dbReference type="CDD" id="cd07033">
    <property type="entry name" value="TPP_PYR_DXS_TK_like"/>
    <property type="match status" value="1"/>
</dbReference>
<dbReference type="CDD" id="cd02012">
    <property type="entry name" value="TPP_TK"/>
    <property type="match status" value="1"/>
</dbReference>
<dbReference type="FunFam" id="3.40.50.920:FF:000003">
    <property type="entry name" value="Transketolase"/>
    <property type="match status" value="1"/>
</dbReference>
<dbReference type="FunFam" id="3.40.50.970:FF:000003">
    <property type="entry name" value="Transketolase"/>
    <property type="match status" value="1"/>
</dbReference>
<dbReference type="FunFam" id="3.40.50.970:FF:000004">
    <property type="entry name" value="Transketolase"/>
    <property type="match status" value="1"/>
</dbReference>
<dbReference type="Gene3D" id="3.40.50.920">
    <property type="match status" value="1"/>
</dbReference>
<dbReference type="Gene3D" id="3.40.50.970">
    <property type="match status" value="2"/>
</dbReference>
<dbReference type="InterPro" id="IPR029061">
    <property type="entry name" value="THDP-binding"/>
</dbReference>
<dbReference type="InterPro" id="IPR009014">
    <property type="entry name" value="Transketo_C/PFOR_II"/>
</dbReference>
<dbReference type="InterPro" id="IPR055152">
    <property type="entry name" value="Transketolase-like_C_2"/>
</dbReference>
<dbReference type="InterPro" id="IPR005475">
    <property type="entry name" value="Transketolase-like_Pyr-bd"/>
</dbReference>
<dbReference type="InterPro" id="IPR005478">
    <property type="entry name" value="Transketolase_bac-like"/>
</dbReference>
<dbReference type="InterPro" id="IPR020826">
    <property type="entry name" value="Transketolase_BS"/>
</dbReference>
<dbReference type="InterPro" id="IPR049557">
    <property type="entry name" value="Transketolase_CS"/>
</dbReference>
<dbReference type="InterPro" id="IPR033247">
    <property type="entry name" value="Transketolase_fam"/>
</dbReference>
<dbReference type="InterPro" id="IPR005474">
    <property type="entry name" value="Transketolase_N"/>
</dbReference>
<dbReference type="NCBIfam" id="TIGR00232">
    <property type="entry name" value="tktlase_bact"/>
    <property type="match status" value="1"/>
</dbReference>
<dbReference type="PANTHER" id="PTHR43522">
    <property type="entry name" value="TRANSKETOLASE"/>
    <property type="match status" value="1"/>
</dbReference>
<dbReference type="PANTHER" id="PTHR43522:SF2">
    <property type="entry name" value="TRANSKETOLASE 1-RELATED"/>
    <property type="match status" value="1"/>
</dbReference>
<dbReference type="Pfam" id="PF02779">
    <property type="entry name" value="Transket_pyr"/>
    <property type="match status" value="1"/>
</dbReference>
<dbReference type="Pfam" id="PF22613">
    <property type="entry name" value="Transketolase_C_1"/>
    <property type="match status" value="1"/>
</dbReference>
<dbReference type="Pfam" id="PF00456">
    <property type="entry name" value="Transketolase_N"/>
    <property type="match status" value="1"/>
</dbReference>
<dbReference type="SMART" id="SM00861">
    <property type="entry name" value="Transket_pyr"/>
    <property type="match status" value="1"/>
</dbReference>
<dbReference type="SUPFAM" id="SSF52518">
    <property type="entry name" value="Thiamin diphosphate-binding fold (THDP-binding)"/>
    <property type="match status" value="2"/>
</dbReference>
<dbReference type="SUPFAM" id="SSF52922">
    <property type="entry name" value="TK C-terminal domain-like"/>
    <property type="match status" value="1"/>
</dbReference>
<dbReference type="PROSITE" id="PS00801">
    <property type="entry name" value="TRANSKETOLASE_1"/>
    <property type="match status" value="1"/>
</dbReference>
<dbReference type="PROSITE" id="PS00802">
    <property type="entry name" value="TRANSKETOLASE_2"/>
    <property type="match status" value="1"/>
</dbReference>
<proteinExistence type="inferred from homology"/>
<sequence>MDTIEKKSVATIRTLSIDAIEKANSGHPGMPMGAAPMAYTLWTKFMNVSPANPGWFNRDRFVLSAGHGSALLYSMLHLSGFDLSIEDLKGFRQWGSKTPGHPEFGHTAGVDATTGPLGQGIAMAVGMAIAERHLAETYNRDSFNVVDHYTYSICGDGDLMEGISSEAASLAGHLQLGRLIVLYDSNDISLDGDLDRSFSENVKQRFEAMNWEVLYVEDGNNIEELTAAIEKARQNEKKPTLIEVKTTIGFGSPNRAGTSGVHGAPLGKEESKLTKEAYAWTYEEDFYVPSEVYEHFAVAVKESGEKKEQEWNAQFAKYKEVYPELAEQLELAIKGELPKDWDQEVPVYEKGSSLASRASSGEVLNGLAKKIPFFVGGSADLAGSNKTTIKNAGDFTAVDYSGKNFWFGVREFAMGAALNGMALHGGLRVFGGTFFVFSDYLRPAIRLAALMGLPVTYVFTHDSIAVGEDGPTHEPVEQLASLRAMPNLSLIRPADGNETAAAWKLAVQSTDHPTALVLTRQNLPTIDQTSEEALAGVEKGAYVVSKSKNETPDALLIASGSEVGLAIEAQAELAKENIDVSVVSMPSMDRFEKQSDEYKNEVLPADVKKRLAIEMGSSFGWGKYTGLEGDVLGIDRFGASAPGETIINEYGFSVPNVVNRVKALINK</sequence>
<protein>
    <recommendedName>
        <fullName>Transketolase</fullName>
        <shortName>TK</shortName>
        <ecNumber>2.2.1.1</ecNumber>
    </recommendedName>
</protein>
<comment type="function">
    <text evidence="1">Catalyzes the transfer of a two-carbon ketol group from a ketose donor to an aldose acceptor, via a covalent intermediate with the cofactor thiamine pyrophosphate.</text>
</comment>
<comment type="catalytic activity">
    <reaction>
        <text>D-sedoheptulose 7-phosphate + D-glyceraldehyde 3-phosphate = aldehydo-D-ribose 5-phosphate + D-xylulose 5-phosphate</text>
        <dbReference type="Rhea" id="RHEA:10508"/>
        <dbReference type="ChEBI" id="CHEBI:57483"/>
        <dbReference type="ChEBI" id="CHEBI:57737"/>
        <dbReference type="ChEBI" id="CHEBI:58273"/>
        <dbReference type="ChEBI" id="CHEBI:59776"/>
        <dbReference type="EC" id="2.2.1.1"/>
    </reaction>
</comment>
<comment type="cofactor">
    <cofactor evidence="1">
        <name>Mg(2+)</name>
        <dbReference type="ChEBI" id="CHEBI:18420"/>
    </cofactor>
    <cofactor evidence="1">
        <name>Ca(2+)</name>
        <dbReference type="ChEBI" id="CHEBI:29108"/>
    </cofactor>
    <cofactor evidence="1">
        <name>Mn(2+)</name>
        <dbReference type="ChEBI" id="CHEBI:29035"/>
    </cofactor>
    <cofactor evidence="1">
        <name>Co(2+)</name>
        <dbReference type="ChEBI" id="CHEBI:48828"/>
    </cofactor>
    <text evidence="1">Binds 1 Mg(2+) ion per subunit. Can also utilize other divalent metal cations, such as Ca(2+), Mn(2+) and Co(2+).</text>
</comment>
<comment type="cofactor">
    <cofactor evidence="1">
        <name>thiamine diphosphate</name>
        <dbReference type="ChEBI" id="CHEBI:58937"/>
    </cofactor>
    <text evidence="1">Binds 1 thiamine pyrophosphate per subunit.</text>
</comment>
<comment type="subunit">
    <text evidence="1">Homodimer.</text>
</comment>
<comment type="similarity">
    <text evidence="2">Belongs to the transketolase family.</text>
</comment>
<accession>P45694</accession>
<organism>
    <name type="scientific">Bacillus subtilis (strain 168)</name>
    <dbReference type="NCBI Taxonomy" id="224308"/>
    <lineage>
        <taxon>Bacteria</taxon>
        <taxon>Bacillati</taxon>
        <taxon>Bacillota</taxon>
        <taxon>Bacilli</taxon>
        <taxon>Bacillales</taxon>
        <taxon>Bacillaceae</taxon>
        <taxon>Bacillus</taxon>
    </lineage>
</organism>